<proteinExistence type="inferred from homology"/>
<feature type="chain" id="PRO_0000111841" description="5'-nucleotidase SurE">
    <location>
        <begin position="1"/>
        <end position="249"/>
    </location>
</feature>
<feature type="binding site" evidence="1">
    <location>
        <position position="9"/>
    </location>
    <ligand>
        <name>a divalent metal cation</name>
        <dbReference type="ChEBI" id="CHEBI:60240"/>
    </ligand>
</feature>
<feature type="binding site" evidence="1">
    <location>
        <position position="10"/>
    </location>
    <ligand>
        <name>a divalent metal cation</name>
        <dbReference type="ChEBI" id="CHEBI:60240"/>
    </ligand>
</feature>
<feature type="binding site" evidence="1">
    <location>
        <position position="40"/>
    </location>
    <ligand>
        <name>a divalent metal cation</name>
        <dbReference type="ChEBI" id="CHEBI:60240"/>
    </ligand>
</feature>
<feature type="binding site" evidence="1">
    <location>
        <position position="92"/>
    </location>
    <ligand>
        <name>a divalent metal cation</name>
        <dbReference type="ChEBI" id="CHEBI:60240"/>
    </ligand>
</feature>
<organism>
    <name type="scientific">Shewanella oneidensis (strain ATCC 700550 / JCM 31522 / CIP 106686 / LMG 19005 / NCIMB 14063 / MR-1)</name>
    <dbReference type="NCBI Taxonomy" id="211586"/>
    <lineage>
        <taxon>Bacteria</taxon>
        <taxon>Pseudomonadati</taxon>
        <taxon>Pseudomonadota</taxon>
        <taxon>Gammaproteobacteria</taxon>
        <taxon>Alteromonadales</taxon>
        <taxon>Shewanellaceae</taxon>
        <taxon>Shewanella</taxon>
    </lineage>
</organism>
<keyword id="KW-0963">Cytoplasm</keyword>
<keyword id="KW-0378">Hydrolase</keyword>
<keyword id="KW-0479">Metal-binding</keyword>
<keyword id="KW-0547">Nucleotide-binding</keyword>
<keyword id="KW-1185">Reference proteome</keyword>
<accession>Q8EBR5</accession>
<protein>
    <recommendedName>
        <fullName evidence="1">5'-nucleotidase SurE</fullName>
        <ecNumber evidence="1">3.1.3.5</ecNumber>
    </recommendedName>
    <alternativeName>
        <fullName evidence="1">Nucleoside 5'-monophosphate phosphohydrolase</fullName>
    </alternativeName>
</protein>
<reference key="1">
    <citation type="journal article" date="2002" name="Nat. Biotechnol.">
        <title>Genome sequence of the dissimilatory metal ion-reducing bacterium Shewanella oneidensis.</title>
        <authorList>
            <person name="Heidelberg J.F."/>
            <person name="Paulsen I.T."/>
            <person name="Nelson K.E."/>
            <person name="Gaidos E.J."/>
            <person name="Nelson W.C."/>
            <person name="Read T.D."/>
            <person name="Eisen J.A."/>
            <person name="Seshadri R."/>
            <person name="Ward N.L."/>
            <person name="Methe B.A."/>
            <person name="Clayton R.A."/>
            <person name="Meyer T."/>
            <person name="Tsapin A."/>
            <person name="Scott J."/>
            <person name="Beanan M.J."/>
            <person name="Brinkac L.M."/>
            <person name="Daugherty S.C."/>
            <person name="DeBoy R.T."/>
            <person name="Dodson R.J."/>
            <person name="Durkin A.S."/>
            <person name="Haft D.H."/>
            <person name="Kolonay J.F."/>
            <person name="Madupu R."/>
            <person name="Peterson J.D."/>
            <person name="Umayam L.A."/>
            <person name="White O."/>
            <person name="Wolf A.M."/>
            <person name="Vamathevan J.J."/>
            <person name="Weidman J.F."/>
            <person name="Impraim M."/>
            <person name="Lee K."/>
            <person name="Berry K.J."/>
            <person name="Lee C."/>
            <person name="Mueller J."/>
            <person name="Khouri H.M."/>
            <person name="Gill J."/>
            <person name="Utterback T.R."/>
            <person name="McDonald L.A."/>
            <person name="Feldblyum T.V."/>
            <person name="Smith H.O."/>
            <person name="Venter J.C."/>
            <person name="Nealson K.H."/>
            <person name="Fraser C.M."/>
        </authorList>
    </citation>
    <scope>NUCLEOTIDE SEQUENCE [LARGE SCALE GENOMIC DNA]</scope>
    <source>
        <strain>ATCC 700550 / JCM 31522 / CIP 106686 / LMG 19005 / NCIMB 14063 / MR-1</strain>
    </source>
</reference>
<dbReference type="EC" id="3.1.3.5" evidence="1"/>
<dbReference type="EMBL" id="AE014299">
    <property type="protein sequence ID" value="AAN56432.2"/>
    <property type="molecule type" value="Genomic_DNA"/>
</dbReference>
<dbReference type="RefSeq" id="NP_718988.2">
    <property type="nucleotide sequence ID" value="NC_004347.2"/>
</dbReference>
<dbReference type="RefSeq" id="WP_011073291.1">
    <property type="nucleotide sequence ID" value="NC_004347.2"/>
</dbReference>
<dbReference type="SMR" id="Q8EBR5"/>
<dbReference type="STRING" id="211586.SO_3435"/>
<dbReference type="PaxDb" id="211586-SO_3435"/>
<dbReference type="KEGG" id="son:SO_3435"/>
<dbReference type="PATRIC" id="fig|211586.12.peg.3330"/>
<dbReference type="eggNOG" id="COG0496">
    <property type="taxonomic scope" value="Bacteria"/>
</dbReference>
<dbReference type="HOGENOM" id="CLU_045192_1_2_6"/>
<dbReference type="OrthoDB" id="9780815at2"/>
<dbReference type="PhylomeDB" id="Q8EBR5"/>
<dbReference type="BioCyc" id="SONE211586:G1GMP-3206-MONOMER"/>
<dbReference type="Proteomes" id="UP000008186">
    <property type="component" value="Chromosome"/>
</dbReference>
<dbReference type="GO" id="GO:0005737">
    <property type="term" value="C:cytoplasm"/>
    <property type="evidence" value="ECO:0007669"/>
    <property type="project" value="UniProtKB-SubCell"/>
</dbReference>
<dbReference type="GO" id="GO:0008254">
    <property type="term" value="F:3'-nucleotidase activity"/>
    <property type="evidence" value="ECO:0000318"/>
    <property type="project" value="GO_Central"/>
</dbReference>
<dbReference type="GO" id="GO:0008253">
    <property type="term" value="F:5'-nucleotidase activity"/>
    <property type="evidence" value="ECO:0000318"/>
    <property type="project" value="GO_Central"/>
</dbReference>
<dbReference type="GO" id="GO:0004309">
    <property type="term" value="F:exopolyphosphatase activity"/>
    <property type="evidence" value="ECO:0000318"/>
    <property type="project" value="GO_Central"/>
</dbReference>
<dbReference type="GO" id="GO:0046872">
    <property type="term" value="F:metal ion binding"/>
    <property type="evidence" value="ECO:0007669"/>
    <property type="project" value="UniProtKB-UniRule"/>
</dbReference>
<dbReference type="GO" id="GO:0000166">
    <property type="term" value="F:nucleotide binding"/>
    <property type="evidence" value="ECO:0007669"/>
    <property type="project" value="UniProtKB-KW"/>
</dbReference>
<dbReference type="FunFam" id="3.40.1210.10:FF:000001">
    <property type="entry name" value="5'/3'-nucleotidase SurE"/>
    <property type="match status" value="1"/>
</dbReference>
<dbReference type="Gene3D" id="3.40.1210.10">
    <property type="entry name" value="Survival protein SurE-like phosphatase/nucleotidase"/>
    <property type="match status" value="1"/>
</dbReference>
<dbReference type="HAMAP" id="MF_00060">
    <property type="entry name" value="SurE"/>
    <property type="match status" value="1"/>
</dbReference>
<dbReference type="InterPro" id="IPR030048">
    <property type="entry name" value="SurE"/>
</dbReference>
<dbReference type="InterPro" id="IPR002828">
    <property type="entry name" value="SurE-like_Pase/nucleotidase"/>
</dbReference>
<dbReference type="InterPro" id="IPR036523">
    <property type="entry name" value="SurE-like_sf"/>
</dbReference>
<dbReference type="NCBIfam" id="NF001489">
    <property type="entry name" value="PRK00346.1-3"/>
    <property type="match status" value="1"/>
</dbReference>
<dbReference type="NCBIfam" id="NF001490">
    <property type="entry name" value="PRK00346.1-4"/>
    <property type="match status" value="1"/>
</dbReference>
<dbReference type="NCBIfam" id="TIGR00087">
    <property type="entry name" value="surE"/>
    <property type="match status" value="1"/>
</dbReference>
<dbReference type="PANTHER" id="PTHR30457">
    <property type="entry name" value="5'-NUCLEOTIDASE SURE"/>
    <property type="match status" value="1"/>
</dbReference>
<dbReference type="PANTHER" id="PTHR30457:SF12">
    <property type="entry name" value="5'_3'-NUCLEOTIDASE SURE"/>
    <property type="match status" value="1"/>
</dbReference>
<dbReference type="Pfam" id="PF01975">
    <property type="entry name" value="SurE"/>
    <property type="match status" value="1"/>
</dbReference>
<dbReference type="SUPFAM" id="SSF64167">
    <property type="entry name" value="SurE-like"/>
    <property type="match status" value="1"/>
</dbReference>
<gene>
    <name evidence="1" type="primary">surE</name>
    <name type="ordered locus">SO_3435</name>
</gene>
<evidence type="ECO:0000255" key="1">
    <source>
        <dbReference type="HAMAP-Rule" id="MF_00060"/>
    </source>
</evidence>
<sequence>MMRILVSNDDGVNAPGIKALTEALAEIATVMTVAPDRNCSGASNSLTLTNPLRINRLDNGYISVHGTPTDCVHLAIRELCDGEPDMVVSGINAGANMGDDTLYSGTVAAAMEGRFLGFPAVAISLNGKAFKHYHTAAVYARRIVQGLLAHPIASDQILNINVPDLPLDEIKGISVTRLGARHKAEGIVRTQDPAGREIFWLGPPGLEQDASEGTDFHAIAHGYVSITPLTVDLTAYRQLSILQNWVDKI</sequence>
<name>SURE_SHEON</name>
<comment type="function">
    <text evidence="1">Nucleotidase that shows phosphatase activity on nucleoside 5'-monophosphates.</text>
</comment>
<comment type="catalytic activity">
    <reaction evidence="1">
        <text>a ribonucleoside 5'-phosphate + H2O = a ribonucleoside + phosphate</text>
        <dbReference type="Rhea" id="RHEA:12484"/>
        <dbReference type="ChEBI" id="CHEBI:15377"/>
        <dbReference type="ChEBI" id="CHEBI:18254"/>
        <dbReference type="ChEBI" id="CHEBI:43474"/>
        <dbReference type="ChEBI" id="CHEBI:58043"/>
        <dbReference type="EC" id="3.1.3.5"/>
    </reaction>
</comment>
<comment type="cofactor">
    <cofactor evidence="1">
        <name>a divalent metal cation</name>
        <dbReference type="ChEBI" id="CHEBI:60240"/>
    </cofactor>
    <text evidence="1">Binds 1 divalent metal cation per subunit.</text>
</comment>
<comment type="subcellular location">
    <subcellularLocation>
        <location evidence="1">Cytoplasm</location>
    </subcellularLocation>
</comment>
<comment type="similarity">
    <text evidence="1">Belongs to the SurE nucleotidase family.</text>
</comment>